<feature type="chain" id="PRO_1000076087" description="33 kDa chaperonin">
    <location>
        <begin position="1"/>
        <end position="293"/>
    </location>
</feature>
<feature type="disulfide bond" description="Redox-active" evidence="1">
    <location>
        <begin position="238"/>
        <end position="240"/>
    </location>
</feature>
<feature type="disulfide bond" description="Redox-active" evidence="1">
    <location>
        <begin position="271"/>
        <end position="274"/>
    </location>
</feature>
<name>HSLO_STAA2</name>
<dbReference type="EMBL" id="CP000736">
    <property type="protein sequence ID" value="ABR51405.1"/>
    <property type="molecule type" value="Genomic_DNA"/>
</dbReference>
<dbReference type="SMR" id="A6TYY7"/>
<dbReference type="KEGG" id="sah:SaurJH1_0547"/>
<dbReference type="HOGENOM" id="CLU_054493_1_0_9"/>
<dbReference type="GO" id="GO:0005737">
    <property type="term" value="C:cytoplasm"/>
    <property type="evidence" value="ECO:0007669"/>
    <property type="project" value="UniProtKB-SubCell"/>
</dbReference>
<dbReference type="GO" id="GO:0044183">
    <property type="term" value="F:protein folding chaperone"/>
    <property type="evidence" value="ECO:0007669"/>
    <property type="project" value="TreeGrafter"/>
</dbReference>
<dbReference type="GO" id="GO:0051082">
    <property type="term" value="F:unfolded protein binding"/>
    <property type="evidence" value="ECO:0007669"/>
    <property type="project" value="UniProtKB-UniRule"/>
</dbReference>
<dbReference type="GO" id="GO:0042026">
    <property type="term" value="P:protein refolding"/>
    <property type="evidence" value="ECO:0007669"/>
    <property type="project" value="TreeGrafter"/>
</dbReference>
<dbReference type="CDD" id="cd00498">
    <property type="entry name" value="Hsp33"/>
    <property type="match status" value="1"/>
</dbReference>
<dbReference type="Gene3D" id="3.55.30.10">
    <property type="entry name" value="Hsp33 domain"/>
    <property type="match status" value="1"/>
</dbReference>
<dbReference type="Gene3D" id="3.90.1280.10">
    <property type="entry name" value="HSP33 redox switch-like"/>
    <property type="match status" value="1"/>
</dbReference>
<dbReference type="HAMAP" id="MF_00117">
    <property type="entry name" value="HslO"/>
    <property type="match status" value="1"/>
</dbReference>
<dbReference type="InterPro" id="IPR000397">
    <property type="entry name" value="Heat_shock_Hsp33"/>
</dbReference>
<dbReference type="InterPro" id="IPR016154">
    <property type="entry name" value="Heat_shock_Hsp33_C"/>
</dbReference>
<dbReference type="InterPro" id="IPR016153">
    <property type="entry name" value="Heat_shock_Hsp33_N"/>
</dbReference>
<dbReference type="NCBIfam" id="NF001033">
    <property type="entry name" value="PRK00114.1"/>
    <property type="match status" value="1"/>
</dbReference>
<dbReference type="PANTHER" id="PTHR30111">
    <property type="entry name" value="33 KDA CHAPERONIN"/>
    <property type="match status" value="1"/>
</dbReference>
<dbReference type="PANTHER" id="PTHR30111:SF1">
    <property type="entry name" value="33 KDA CHAPERONIN"/>
    <property type="match status" value="1"/>
</dbReference>
<dbReference type="Pfam" id="PF01430">
    <property type="entry name" value="HSP33"/>
    <property type="match status" value="1"/>
</dbReference>
<dbReference type="PIRSF" id="PIRSF005261">
    <property type="entry name" value="Heat_shock_Hsp33"/>
    <property type="match status" value="1"/>
</dbReference>
<dbReference type="SUPFAM" id="SSF64397">
    <property type="entry name" value="Hsp33 domain"/>
    <property type="match status" value="1"/>
</dbReference>
<dbReference type="SUPFAM" id="SSF118352">
    <property type="entry name" value="HSP33 redox switch-like"/>
    <property type="match status" value="1"/>
</dbReference>
<evidence type="ECO:0000255" key="1">
    <source>
        <dbReference type="HAMAP-Rule" id="MF_00117"/>
    </source>
</evidence>
<proteinExistence type="inferred from homology"/>
<sequence length="293" mass="31804">MTHDYIVKALAFDGEIRAYAALTTETVQEAQTRHYTWPTASAAMGRTMTATAMMGAMLKGDQKLTVTVDGQGPIGRIIADANAKGEVRAYVDHPQTHFPLNEQGKLDVRRAVGTNGSIIVVKDVGMKDYFSGASPIVSGELGEDFTYYYATSEQTPSSVGLGVLVNPDNTIKAAGGFIIQVMPGAKDETISKLEKAISEMTPVSKLIEQGLTPEGLLNEILGEDHVQILEKMPVQFECNCSHEKFLNAIKGLGEAEIQNMIKEDHGAEAVCHFCGNKYKYTEEELNVLLESLA</sequence>
<reference key="1">
    <citation type="submission" date="2007-06" db="EMBL/GenBank/DDBJ databases">
        <title>Complete sequence of chromosome of Staphylococcus aureus subsp. aureus JH1.</title>
        <authorList>
            <consortium name="US DOE Joint Genome Institute"/>
            <person name="Copeland A."/>
            <person name="Lucas S."/>
            <person name="Lapidus A."/>
            <person name="Barry K."/>
            <person name="Detter J.C."/>
            <person name="Glavina del Rio T."/>
            <person name="Hammon N."/>
            <person name="Israni S."/>
            <person name="Dalin E."/>
            <person name="Tice H."/>
            <person name="Pitluck S."/>
            <person name="Chain P."/>
            <person name="Malfatti S."/>
            <person name="Shin M."/>
            <person name="Vergez L."/>
            <person name="Schmutz J."/>
            <person name="Larimer F."/>
            <person name="Land M."/>
            <person name="Hauser L."/>
            <person name="Kyrpides N."/>
            <person name="Ivanova N."/>
            <person name="Tomasz A."/>
            <person name="Richardson P."/>
        </authorList>
    </citation>
    <scope>NUCLEOTIDE SEQUENCE [LARGE SCALE GENOMIC DNA]</scope>
    <source>
        <strain>JH1</strain>
    </source>
</reference>
<organism>
    <name type="scientific">Staphylococcus aureus (strain JH1)</name>
    <dbReference type="NCBI Taxonomy" id="359787"/>
    <lineage>
        <taxon>Bacteria</taxon>
        <taxon>Bacillati</taxon>
        <taxon>Bacillota</taxon>
        <taxon>Bacilli</taxon>
        <taxon>Bacillales</taxon>
        <taxon>Staphylococcaceae</taxon>
        <taxon>Staphylococcus</taxon>
    </lineage>
</organism>
<gene>
    <name evidence="1" type="primary">hslO</name>
    <name type="ordered locus">SaurJH1_0547</name>
</gene>
<accession>A6TYY7</accession>
<keyword id="KW-0143">Chaperone</keyword>
<keyword id="KW-0963">Cytoplasm</keyword>
<keyword id="KW-1015">Disulfide bond</keyword>
<keyword id="KW-0676">Redox-active center</keyword>
<keyword id="KW-0862">Zinc</keyword>
<comment type="function">
    <text evidence="1">Redox regulated molecular chaperone. Protects both thermally unfolding and oxidatively damaged proteins from irreversible aggregation. Plays an important role in the bacterial defense system toward oxidative stress.</text>
</comment>
<comment type="subcellular location">
    <subcellularLocation>
        <location evidence="1">Cytoplasm</location>
    </subcellularLocation>
</comment>
<comment type="PTM">
    <text evidence="1">Under oxidizing conditions two disulfide bonds are formed involving the reactive cysteines. Under reducing conditions zinc is bound to the reactive cysteines and the protein is inactive.</text>
</comment>
<comment type="similarity">
    <text evidence="1">Belongs to the HSP33 family.</text>
</comment>
<protein>
    <recommendedName>
        <fullName evidence="1">33 kDa chaperonin</fullName>
    </recommendedName>
    <alternativeName>
        <fullName evidence="1">Heat shock protein 33 homolog</fullName>
        <shortName evidence="1">HSP33</shortName>
    </alternativeName>
</protein>